<name>UBC4_SOLLC</name>
<dbReference type="EC" id="2.3.2.23"/>
<dbReference type="EMBL" id="L23762">
    <property type="protein sequence ID" value="AAA34125.1"/>
    <property type="molecule type" value="mRNA"/>
</dbReference>
<dbReference type="RefSeq" id="NP_001234247.1">
    <property type="nucleotide sequence ID" value="NM_001247318.2"/>
</dbReference>
<dbReference type="RefSeq" id="NP_001294911.1">
    <property type="nucleotide sequence ID" value="NM_001307982.1"/>
</dbReference>
<dbReference type="RefSeq" id="NP_001294913.1">
    <property type="nucleotide sequence ID" value="NM_001307984.1"/>
</dbReference>
<dbReference type="RefSeq" id="XP_019069675.1">
    <property type="nucleotide sequence ID" value="XM_019214130.3"/>
</dbReference>
<dbReference type="SMR" id="P35135"/>
<dbReference type="STRING" id="4081.P35135"/>
<dbReference type="PaxDb" id="4081-Solyc06g007510.2.1"/>
<dbReference type="EnsemblPlants" id="Solyc06g007510.3.1">
    <property type="protein sequence ID" value="Solyc06g007510.3.1"/>
    <property type="gene ID" value="Solyc06g007510.3"/>
</dbReference>
<dbReference type="EnsemblPlants" id="Solyc06g082600.3.1">
    <property type="protein sequence ID" value="Solyc06g082600.3.1"/>
    <property type="gene ID" value="Solyc06g082600.3"/>
</dbReference>
<dbReference type="GeneID" id="100301932"/>
<dbReference type="GeneID" id="101249087"/>
<dbReference type="Gramene" id="Solyc06g007510.3.1">
    <property type="protein sequence ID" value="Solyc06g007510.3.1"/>
    <property type="gene ID" value="Solyc06g007510.3"/>
</dbReference>
<dbReference type="Gramene" id="Solyc06g082600.3.1">
    <property type="protein sequence ID" value="Solyc06g082600.3.1"/>
    <property type="gene ID" value="Solyc06g082600.3"/>
</dbReference>
<dbReference type="KEGG" id="sly:100301932"/>
<dbReference type="KEGG" id="sly:101249087"/>
<dbReference type="eggNOG" id="KOG0417">
    <property type="taxonomic scope" value="Eukaryota"/>
</dbReference>
<dbReference type="HOGENOM" id="CLU_030988_13_3_1"/>
<dbReference type="InParanoid" id="P35135"/>
<dbReference type="OMA" id="NFHWQAT"/>
<dbReference type="OrthoDB" id="1244109at2759"/>
<dbReference type="PhylomeDB" id="P35135"/>
<dbReference type="UniPathway" id="UPA00143"/>
<dbReference type="Proteomes" id="UP000004994">
    <property type="component" value="Chromosome 6"/>
</dbReference>
<dbReference type="ExpressionAtlas" id="P35135">
    <property type="expression patterns" value="baseline and differential"/>
</dbReference>
<dbReference type="GO" id="GO:0005634">
    <property type="term" value="C:nucleus"/>
    <property type="evidence" value="ECO:0000318"/>
    <property type="project" value="GO_Central"/>
</dbReference>
<dbReference type="GO" id="GO:0005524">
    <property type="term" value="F:ATP binding"/>
    <property type="evidence" value="ECO:0007669"/>
    <property type="project" value="UniProtKB-KW"/>
</dbReference>
<dbReference type="GO" id="GO:0061631">
    <property type="term" value="F:ubiquitin conjugating enzyme activity"/>
    <property type="evidence" value="ECO:0007669"/>
    <property type="project" value="UniProtKB-EC"/>
</dbReference>
<dbReference type="GO" id="GO:0000209">
    <property type="term" value="P:protein polyubiquitination"/>
    <property type="evidence" value="ECO:0000318"/>
    <property type="project" value="GO_Central"/>
</dbReference>
<dbReference type="GO" id="GO:0006511">
    <property type="term" value="P:ubiquitin-dependent protein catabolic process"/>
    <property type="evidence" value="ECO:0000318"/>
    <property type="project" value="GO_Central"/>
</dbReference>
<dbReference type="CDD" id="cd23792">
    <property type="entry name" value="UBCc_UBE2D"/>
    <property type="match status" value="1"/>
</dbReference>
<dbReference type="FunFam" id="3.10.110.10:FF:000001">
    <property type="entry name" value="Ubiquitin-conjugating enzyme 28, E2"/>
    <property type="match status" value="1"/>
</dbReference>
<dbReference type="Gene3D" id="3.10.110.10">
    <property type="entry name" value="Ubiquitin Conjugating Enzyme"/>
    <property type="match status" value="1"/>
</dbReference>
<dbReference type="InterPro" id="IPR000608">
    <property type="entry name" value="UBQ-conjugat_E2_core"/>
</dbReference>
<dbReference type="InterPro" id="IPR023313">
    <property type="entry name" value="UBQ-conjugating_AS"/>
</dbReference>
<dbReference type="InterPro" id="IPR016135">
    <property type="entry name" value="UBQ-conjugating_enzyme/RWD"/>
</dbReference>
<dbReference type="PANTHER" id="PTHR24068">
    <property type="entry name" value="UBIQUITIN-CONJUGATING ENZYME E2"/>
    <property type="match status" value="1"/>
</dbReference>
<dbReference type="Pfam" id="PF00179">
    <property type="entry name" value="UQ_con"/>
    <property type="match status" value="1"/>
</dbReference>
<dbReference type="SMART" id="SM00212">
    <property type="entry name" value="UBCc"/>
    <property type="match status" value="1"/>
</dbReference>
<dbReference type="SUPFAM" id="SSF54495">
    <property type="entry name" value="UBC-like"/>
    <property type="match status" value="1"/>
</dbReference>
<dbReference type="PROSITE" id="PS00183">
    <property type="entry name" value="UBC_1"/>
    <property type="match status" value="1"/>
</dbReference>
<dbReference type="PROSITE" id="PS50127">
    <property type="entry name" value="UBC_2"/>
    <property type="match status" value="1"/>
</dbReference>
<keyword id="KW-0067">ATP-binding</keyword>
<keyword id="KW-0547">Nucleotide-binding</keyword>
<keyword id="KW-1185">Reference proteome</keyword>
<keyword id="KW-0808">Transferase</keyword>
<keyword id="KW-0833">Ubl conjugation pathway</keyword>
<accession>P35135</accession>
<evidence type="ECO:0000255" key="1">
    <source>
        <dbReference type="PROSITE-ProRule" id="PRU00388"/>
    </source>
</evidence>
<evidence type="ECO:0000255" key="2">
    <source>
        <dbReference type="PROSITE-ProRule" id="PRU10133"/>
    </source>
</evidence>
<reference key="1">
    <citation type="submission" date="1993-11" db="EMBL/GenBank/DDBJ databases">
        <title>Expression of an ubiquitin carrier protein gene in tomato root cells infected with the nematode Meloidogyne incognita.</title>
        <authorList>
            <person name="Bird D.M."/>
            <person name="Wilson M.A."/>
        </authorList>
    </citation>
    <scope>NUCLEOTIDE SEQUENCE [MRNA]</scope>
    <source>
        <tissue>Root</tissue>
    </source>
</reference>
<feature type="chain" id="PRO_0000082580" description="Ubiquitin-conjugating enzyme E2-17 kDa">
    <location>
        <begin position="1"/>
        <end position="148"/>
    </location>
</feature>
<feature type="domain" description="UBC core" evidence="1">
    <location>
        <begin position="1"/>
        <end position="147"/>
    </location>
</feature>
<feature type="active site" description="Glycyl thioester intermediate" evidence="1 2">
    <location>
        <position position="85"/>
    </location>
</feature>
<proteinExistence type="evidence at transcript level"/>
<organism>
    <name type="scientific">Solanum lycopersicum</name>
    <name type="common">Tomato</name>
    <name type="synonym">Lycopersicon esculentum</name>
    <dbReference type="NCBI Taxonomy" id="4081"/>
    <lineage>
        <taxon>Eukaryota</taxon>
        <taxon>Viridiplantae</taxon>
        <taxon>Streptophyta</taxon>
        <taxon>Embryophyta</taxon>
        <taxon>Tracheophyta</taxon>
        <taxon>Spermatophyta</taxon>
        <taxon>Magnoliopsida</taxon>
        <taxon>eudicotyledons</taxon>
        <taxon>Gunneridae</taxon>
        <taxon>Pentapetalae</taxon>
        <taxon>asterids</taxon>
        <taxon>lamiids</taxon>
        <taxon>Solanales</taxon>
        <taxon>Solanaceae</taxon>
        <taxon>Solanoideae</taxon>
        <taxon>Solaneae</taxon>
        <taxon>Solanum</taxon>
        <taxon>Solanum subgen. Lycopersicon</taxon>
    </lineage>
</organism>
<protein>
    <recommendedName>
        <fullName>Ubiquitin-conjugating enzyme E2-17 kDa</fullName>
        <ecNumber>2.3.2.23</ecNumber>
    </recommendedName>
    <alternativeName>
        <fullName>E2 ubiquitin-conjugating enzyme</fullName>
    </alternativeName>
    <alternativeName>
        <fullName>Ubiquitin carrier protein</fullName>
    </alternativeName>
    <alternativeName>
        <fullName>Ubiquitin-protein ligase</fullName>
    </alternativeName>
</protein>
<comment type="function">
    <text evidence="1">Catalyzes the covalent attachment of ubiquitin to other proteins. Mediates the selective degradation of short-lived and abnormal proteins.</text>
</comment>
<comment type="catalytic activity">
    <reaction evidence="1 2">
        <text>S-ubiquitinyl-[E1 ubiquitin-activating enzyme]-L-cysteine + [E2 ubiquitin-conjugating enzyme]-L-cysteine = [E1 ubiquitin-activating enzyme]-L-cysteine + S-ubiquitinyl-[E2 ubiquitin-conjugating enzyme]-L-cysteine.</text>
        <dbReference type="EC" id="2.3.2.23"/>
    </reaction>
</comment>
<comment type="pathway">
    <text evidence="1">Protein modification; protein ubiquitination.</text>
</comment>
<comment type="similarity">
    <text evidence="1">Belongs to the ubiquitin-conjugating enzyme family.</text>
</comment>
<sequence length="148" mass="16522">MASKRILKELKDLQKDPPTSCSAGPVAEDMFHWQATIMGPTDSPYAGGVFLVSIHFPPDYPFKPPKVAFRTKVFHPNINSNGSICLDILKEQWSPALTISKVLLSICSLLTDPNPDDPLVPEIAHMYKTDRAKYETTARSWTQKYAMG</sequence>